<feature type="chain" id="PRO_0000267281" description="dTTP/UTP pyrophosphatase">
    <location>
        <begin position="1"/>
        <end position="196"/>
    </location>
</feature>
<feature type="active site" description="Proton acceptor" evidence="1">
    <location>
        <position position="72"/>
    </location>
</feature>
<feature type="site" description="Important for substrate specificity" evidence="1">
    <location>
        <position position="13"/>
    </location>
</feature>
<feature type="site" description="Important for substrate specificity" evidence="1">
    <location>
        <position position="73"/>
    </location>
</feature>
<feature type="site" description="Important for substrate specificity" evidence="1">
    <location>
        <position position="155"/>
    </location>
</feature>
<reference key="1">
    <citation type="journal article" date="2006" name="DNA Res.">
        <title>Genome sequence of the cat pathogen, Chlamydophila felis.</title>
        <authorList>
            <person name="Azuma Y."/>
            <person name="Hirakawa H."/>
            <person name="Yamashita A."/>
            <person name="Cai Y."/>
            <person name="Rahman M.A."/>
            <person name="Suzuki H."/>
            <person name="Mitaku S."/>
            <person name="Toh H."/>
            <person name="Goto S."/>
            <person name="Murakami T."/>
            <person name="Sugi K."/>
            <person name="Hayashi H."/>
            <person name="Fukushi H."/>
            <person name="Hattori M."/>
            <person name="Kuhara S."/>
            <person name="Shirai M."/>
        </authorList>
    </citation>
    <scope>NUCLEOTIDE SEQUENCE [LARGE SCALE GENOMIC DNA]</scope>
    <source>
        <strain>Fe/C-56</strain>
    </source>
</reference>
<name>NTPPA_CHLFF</name>
<organism>
    <name type="scientific">Chlamydia felis (strain Fe/C-56)</name>
    <name type="common">Chlamydophila felis</name>
    <dbReference type="NCBI Taxonomy" id="264202"/>
    <lineage>
        <taxon>Bacteria</taxon>
        <taxon>Pseudomonadati</taxon>
        <taxon>Chlamydiota</taxon>
        <taxon>Chlamydiia</taxon>
        <taxon>Chlamydiales</taxon>
        <taxon>Chlamydiaceae</taxon>
        <taxon>Chlamydia/Chlamydophila group</taxon>
        <taxon>Chlamydia</taxon>
    </lineage>
</organism>
<evidence type="ECO:0000255" key="1">
    <source>
        <dbReference type="HAMAP-Rule" id="MF_00528"/>
    </source>
</evidence>
<dbReference type="EC" id="3.6.1.9" evidence="1"/>
<dbReference type="EMBL" id="AP006861">
    <property type="protein sequence ID" value="BAE81461.1"/>
    <property type="molecule type" value="Genomic_DNA"/>
</dbReference>
<dbReference type="RefSeq" id="WP_011458239.1">
    <property type="nucleotide sequence ID" value="NC_007899.1"/>
</dbReference>
<dbReference type="SMR" id="Q253S7"/>
<dbReference type="STRING" id="264202.gene:10544516"/>
<dbReference type="KEGG" id="cfe:BAE81461.1"/>
<dbReference type="eggNOG" id="COG0424">
    <property type="taxonomic scope" value="Bacteria"/>
</dbReference>
<dbReference type="HOGENOM" id="CLU_040416_0_0_0"/>
<dbReference type="OrthoDB" id="9807767at2"/>
<dbReference type="Proteomes" id="UP000001260">
    <property type="component" value="Chromosome"/>
</dbReference>
<dbReference type="GO" id="GO:0005737">
    <property type="term" value="C:cytoplasm"/>
    <property type="evidence" value="ECO:0007669"/>
    <property type="project" value="UniProtKB-SubCell"/>
</dbReference>
<dbReference type="GO" id="GO:0036218">
    <property type="term" value="F:dTTP diphosphatase activity"/>
    <property type="evidence" value="ECO:0007669"/>
    <property type="project" value="RHEA"/>
</dbReference>
<dbReference type="GO" id="GO:0036221">
    <property type="term" value="F:UTP diphosphatase activity"/>
    <property type="evidence" value="ECO:0007669"/>
    <property type="project" value="RHEA"/>
</dbReference>
<dbReference type="GO" id="GO:0009117">
    <property type="term" value="P:nucleotide metabolic process"/>
    <property type="evidence" value="ECO:0007669"/>
    <property type="project" value="UniProtKB-KW"/>
</dbReference>
<dbReference type="CDD" id="cd00555">
    <property type="entry name" value="Maf"/>
    <property type="match status" value="1"/>
</dbReference>
<dbReference type="Gene3D" id="3.90.950.10">
    <property type="match status" value="1"/>
</dbReference>
<dbReference type="HAMAP" id="MF_00528">
    <property type="entry name" value="Maf"/>
    <property type="match status" value="1"/>
</dbReference>
<dbReference type="InterPro" id="IPR029001">
    <property type="entry name" value="ITPase-like_fam"/>
</dbReference>
<dbReference type="InterPro" id="IPR003697">
    <property type="entry name" value="Maf-like"/>
</dbReference>
<dbReference type="NCBIfam" id="TIGR00172">
    <property type="entry name" value="maf"/>
    <property type="match status" value="1"/>
</dbReference>
<dbReference type="PANTHER" id="PTHR43213">
    <property type="entry name" value="BIFUNCTIONAL DTTP/UTP PYROPHOSPHATASE/METHYLTRANSFERASE PROTEIN-RELATED"/>
    <property type="match status" value="1"/>
</dbReference>
<dbReference type="PANTHER" id="PTHR43213:SF5">
    <property type="entry name" value="BIFUNCTIONAL DTTP_UTP PYROPHOSPHATASE_METHYLTRANSFERASE PROTEIN-RELATED"/>
    <property type="match status" value="1"/>
</dbReference>
<dbReference type="Pfam" id="PF02545">
    <property type="entry name" value="Maf"/>
    <property type="match status" value="1"/>
</dbReference>
<dbReference type="PIRSF" id="PIRSF006305">
    <property type="entry name" value="Maf"/>
    <property type="match status" value="1"/>
</dbReference>
<dbReference type="SUPFAM" id="SSF52972">
    <property type="entry name" value="ITPase-like"/>
    <property type="match status" value="1"/>
</dbReference>
<accession>Q253S7</accession>
<proteinExistence type="inferred from homology"/>
<comment type="function">
    <text evidence="1">Nucleoside triphosphate pyrophosphatase that hydrolyzes dTTP and UTP. May have a dual role in cell division arrest and in preventing the incorporation of modified nucleotides into cellular nucleic acids.</text>
</comment>
<comment type="catalytic activity">
    <reaction evidence="1">
        <text>dTTP + H2O = dTMP + diphosphate + H(+)</text>
        <dbReference type="Rhea" id="RHEA:28534"/>
        <dbReference type="ChEBI" id="CHEBI:15377"/>
        <dbReference type="ChEBI" id="CHEBI:15378"/>
        <dbReference type="ChEBI" id="CHEBI:33019"/>
        <dbReference type="ChEBI" id="CHEBI:37568"/>
        <dbReference type="ChEBI" id="CHEBI:63528"/>
        <dbReference type="EC" id="3.6.1.9"/>
    </reaction>
</comment>
<comment type="catalytic activity">
    <reaction evidence="1">
        <text>UTP + H2O = UMP + diphosphate + H(+)</text>
        <dbReference type="Rhea" id="RHEA:29395"/>
        <dbReference type="ChEBI" id="CHEBI:15377"/>
        <dbReference type="ChEBI" id="CHEBI:15378"/>
        <dbReference type="ChEBI" id="CHEBI:33019"/>
        <dbReference type="ChEBI" id="CHEBI:46398"/>
        <dbReference type="ChEBI" id="CHEBI:57865"/>
        <dbReference type="EC" id="3.6.1.9"/>
    </reaction>
</comment>
<comment type="cofactor">
    <cofactor evidence="1">
        <name>a divalent metal cation</name>
        <dbReference type="ChEBI" id="CHEBI:60240"/>
    </cofactor>
</comment>
<comment type="subcellular location">
    <subcellularLocation>
        <location evidence="1">Cytoplasm</location>
    </subcellularLocation>
</comment>
<comment type="similarity">
    <text evidence="1">Belongs to the Maf family. YhdE subfamily.</text>
</comment>
<gene>
    <name type="ordered locus">CF0689</name>
</gene>
<keyword id="KW-0963">Cytoplasm</keyword>
<keyword id="KW-0378">Hydrolase</keyword>
<keyword id="KW-0546">Nucleotide metabolism</keyword>
<protein>
    <recommendedName>
        <fullName evidence="1">dTTP/UTP pyrophosphatase</fullName>
        <shortName evidence="1">dTTPase/UTPase</shortName>
        <ecNumber evidence="1">3.6.1.9</ecNumber>
    </recommendedName>
    <alternativeName>
        <fullName evidence="1">Nucleoside triphosphate pyrophosphatase</fullName>
    </alternativeName>
    <alternativeName>
        <fullName evidence="1">Nucleotide pyrophosphatase</fullName>
        <shortName evidence="1">Nucleotide PPase</shortName>
    </alternativeName>
</protein>
<sequence length="196" mass="21871">MEPQLILGSSSPRRKSILQYFRIPFTCISPSFEERSVPYQGDPVAYSQELAVGKAESIVQDHNPEGVILTADTVVIYKGKVFNKPGSHDEAIEMLKTLSGQTHSIITSVALLQQKKLMVGQETTQVTFNKLPEEYLGRYVEAFSTLDKCGGYSTQEGGGLIIHNIQGCAYNVQGLPIRTLYHLLLEFDINLWDYLV</sequence>